<dbReference type="EC" id="5.99.-.-" evidence="1"/>
<dbReference type="EMBL" id="CP000518">
    <property type="protein sequence ID" value="ABL93811.1"/>
    <property type="molecule type" value="Genomic_DNA"/>
</dbReference>
<dbReference type="SMR" id="A1ULV3"/>
<dbReference type="STRING" id="189918.Mkms_4620"/>
<dbReference type="KEGG" id="mkm:Mkms_4620"/>
<dbReference type="HOGENOM" id="CLU_085483_0_0_11"/>
<dbReference type="OrthoDB" id="4804006at2"/>
<dbReference type="GO" id="GO:0020037">
    <property type="term" value="F:heme binding"/>
    <property type="evidence" value="ECO:0007669"/>
    <property type="project" value="UniProtKB-UniRule"/>
</dbReference>
<dbReference type="GO" id="GO:0046872">
    <property type="term" value="F:metal ion binding"/>
    <property type="evidence" value="ECO:0007669"/>
    <property type="project" value="UniProtKB-KW"/>
</dbReference>
<dbReference type="GO" id="GO:0062213">
    <property type="term" value="F:peroxynitrite isomerase activity"/>
    <property type="evidence" value="ECO:0007669"/>
    <property type="project" value="UniProtKB-UniRule"/>
</dbReference>
<dbReference type="CDD" id="cd07828">
    <property type="entry name" value="lipocalin_heme-bd-THAP4-like"/>
    <property type="match status" value="1"/>
</dbReference>
<dbReference type="Gene3D" id="2.40.128.20">
    <property type="match status" value="1"/>
</dbReference>
<dbReference type="HAMAP" id="MF_01297">
    <property type="entry name" value="nitrobindin"/>
    <property type="match status" value="1"/>
</dbReference>
<dbReference type="InterPro" id="IPR012674">
    <property type="entry name" value="Calycin"/>
</dbReference>
<dbReference type="InterPro" id="IPR022939">
    <property type="entry name" value="Nb(III)_bact/plant"/>
</dbReference>
<dbReference type="InterPro" id="IPR045165">
    <property type="entry name" value="Nitrobindin"/>
</dbReference>
<dbReference type="InterPro" id="IPR014878">
    <property type="entry name" value="THAP4-like_heme-bd"/>
</dbReference>
<dbReference type="PANTHER" id="PTHR15854:SF4">
    <property type="entry name" value="PEROXYNITRITE ISOMERASE THAP4"/>
    <property type="match status" value="1"/>
</dbReference>
<dbReference type="PANTHER" id="PTHR15854">
    <property type="entry name" value="THAP4 PROTEIN"/>
    <property type="match status" value="1"/>
</dbReference>
<dbReference type="Pfam" id="PF08768">
    <property type="entry name" value="THAP4_heme-bd"/>
    <property type="match status" value="1"/>
</dbReference>
<dbReference type="SUPFAM" id="SSF50814">
    <property type="entry name" value="Lipocalins"/>
    <property type="match status" value="1"/>
</dbReference>
<sequence length="224" mass="24302">MTAPQEPEDAAGSIFSTSGDRAVADAAERAKVTASRNIPVFDDLPLPADTANLRKGVDFNDALLALLPLVGVWRGEGEGRGPHGDYRFGQQIVVSHDGGDYLNWEARSWRLTESGEYDRVGLRETGFWRFVSDPADPSESQAIELLLAHSAGYIELFYGHPRNQSSWELVTDALARSKSGMLVGGAKRLYGIVEGGDLAYVEERVDADGGLVPHLSARLARYVG</sequence>
<feature type="chain" id="PRO_0000356930" description="Peroxynitrite isomerase">
    <location>
        <begin position="1"/>
        <end position="224"/>
    </location>
</feature>
<feature type="short sequence motif" description="GXWXGXG" evidence="1">
    <location>
        <begin position="71"/>
        <end position="77"/>
    </location>
</feature>
<feature type="binding site" evidence="1">
    <location>
        <position position="187"/>
    </location>
    <ligand>
        <name>heme b</name>
        <dbReference type="ChEBI" id="CHEBI:60344"/>
    </ligand>
</feature>
<feature type="binding site" description="axial binding residue" evidence="1">
    <location>
        <position position="214"/>
    </location>
    <ligand>
        <name>heme b</name>
        <dbReference type="ChEBI" id="CHEBI:60344"/>
    </ligand>
    <ligandPart>
        <name>Fe</name>
        <dbReference type="ChEBI" id="CHEBI:18248"/>
    </ligandPart>
</feature>
<evidence type="ECO:0000255" key="1">
    <source>
        <dbReference type="HAMAP-Rule" id="MF_01297"/>
    </source>
</evidence>
<protein>
    <recommendedName>
        <fullName>Peroxynitrite isomerase</fullName>
        <ecNumber evidence="1">5.99.-.-</ecNumber>
    </recommendedName>
    <alternativeName>
        <fullName>Ferric nitrobindin</fullName>
        <shortName>Nb(III)</shortName>
    </alternativeName>
</protein>
<organism>
    <name type="scientific">Mycobacterium sp. (strain KMS)</name>
    <dbReference type="NCBI Taxonomy" id="189918"/>
    <lineage>
        <taxon>Bacteria</taxon>
        <taxon>Bacillati</taxon>
        <taxon>Actinomycetota</taxon>
        <taxon>Actinomycetes</taxon>
        <taxon>Mycobacteriales</taxon>
        <taxon>Mycobacteriaceae</taxon>
        <taxon>Mycobacterium</taxon>
    </lineage>
</organism>
<gene>
    <name type="ordered locus">Mkms_4620</name>
</gene>
<proteinExistence type="inferred from homology"/>
<reference key="1">
    <citation type="submission" date="2006-12" db="EMBL/GenBank/DDBJ databases">
        <title>Complete sequence of chromosome of Mycobacterium sp. KMS.</title>
        <authorList>
            <consortium name="US DOE Joint Genome Institute"/>
            <person name="Copeland A."/>
            <person name="Lucas S."/>
            <person name="Lapidus A."/>
            <person name="Barry K."/>
            <person name="Detter J.C."/>
            <person name="Glavina del Rio T."/>
            <person name="Hammon N."/>
            <person name="Israni S."/>
            <person name="Dalin E."/>
            <person name="Tice H."/>
            <person name="Pitluck S."/>
            <person name="Kiss H."/>
            <person name="Brettin T."/>
            <person name="Bruce D."/>
            <person name="Han C."/>
            <person name="Tapia R."/>
            <person name="Gilna P."/>
            <person name="Schmutz J."/>
            <person name="Larimer F."/>
            <person name="Land M."/>
            <person name="Hauser L."/>
            <person name="Kyrpides N."/>
            <person name="Mikhailova N."/>
            <person name="Miller C.D."/>
            <person name="Richardson P."/>
        </authorList>
    </citation>
    <scope>NUCLEOTIDE SEQUENCE [LARGE SCALE GENOMIC DNA]</scope>
    <source>
        <strain>KMS</strain>
    </source>
</reference>
<comment type="function">
    <text evidence="1">Heme-binding protein able to scavenge peroxynitrite and to protect free L-tyrosine against peroxynitrite-mediated nitration, by acting as a peroxynitrite isomerase that converts peroxynitrite to nitrate. Therefore, this protein likely plays a role in peroxynitrite sensing and in the detoxification of reactive nitrogen and oxygen species (RNS and ROS, respectively). Is able to bind nitric oxide (NO) in vitro, but may act as a sensor of peroxynitrite levels in vivo.</text>
</comment>
<comment type="catalytic activity">
    <reaction evidence="1">
        <text>peroxynitrite = nitrate</text>
        <dbReference type="Rhea" id="RHEA:63116"/>
        <dbReference type="ChEBI" id="CHEBI:17632"/>
        <dbReference type="ChEBI" id="CHEBI:25941"/>
    </reaction>
    <physiologicalReaction direction="left-to-right" evidence="1">
        <dbReference type="Rhea" id="RHEA:63117"/>
    </physiologicalReaction>
</comment>
<comment type="cofactor">
    <cofactor evidence="1">
        <name>heme b</name>
        <dbReference type="ChEBI" id="CHEBI:60344"/>
    </cofactor>
    <text evidence="1">Binds 1 heme b group per subunit, that coordinates a highly solvent-exposed Fe(III) atom.</text>
</comment>
<comment type="pathway">
    <text evidence="1">Nitrogen metabolism.</text>
</comment>
<comment type="subunit">
    <text evidence="1">Homodimer.</text>
</comment>
<comment type="domain">
    <text evidence="1">Forms a 10-stranded antiparallel beta-barrel structure able to accommodate a hydrophobic ligand in its interior. In fact, this fold hosts the heme group, which is located in a wide surface cleft.</text>
</comment>
<comment type="similarity">
    <text evidence="1">Belongs to the nitrobindin family.</text>
</comment>
<name>NB_MYCSK</name>
<accession>A1ULV3</accession>
<keyword id="KW-0349">Heme</keyword>
<keyword id="KW-0408">Iron</keyword>
<keyword id="KW-0413">Isomerase</keyword>
<keyword id="KW-0479">Metal-binding</keyword>